<dbReference type="EMBL" id="AL123456">
    <property type="protein sequence ID" value="CCP44506.1"/>
    <property type="molecule type" value="Genomic_DNA"/>
</dbReference>
<dbReference type="PIR" id="E70985">
    <property type="entry name" value="E70985"/>
</dbReference>
<dbReference type="RefSeq" id="NP_216256.1">
    <property type="nucleotide sequence ID" value="NC_000962.3"/>
</dbReference>
<dbReference type="RefSeq" id="WP_003408528.1">
    <property type="nucleotide sequence ID" value="NZ_NVQJ01000010.1"/>
</dbReference>
<dbReference type="SMR" id="P9WJ31"/>
<dbReference type="STRING" id="83332.Rv1740"/>
<dbReference type="PaxDb" id="83332-Rv1740"/>
<dbReference type="GeneID" id="885226"/>
<dbReference type="KEGG" id="mtu:Rv1740"/>
<dbReference type="KEGG" id="mtv:RVBD_1740"/>
<dbReference type="TubercuList" id="Rv1740"/>
<dbReference type="eggNOG" id="COG4423">
    <property type="taxonomic scope" value="Bacteria"/>
</dbReference>
<dbReference type="InParanoid" id="P9WJ31"/>
<dbReference type="OrthoDB" id="495439at2"/>
<dbReference type="PhylomeDB" id="P9WJ31"/>
<dbReference type="Proteomes" id="UP000001584">
    <property type="component" value="Chromosome"/>
</dbReference>
<dbReference type="InterPro" id="IPR011660">
    <property type="entry name" value="VapB-like"/>
</dbReference>
<dbReference type="Pfam" id="PF07704">
    <property type="entry name" value="PSK_trans_fac"/>
    <property type="match status" value="1"/>
</dbReference>
<accession>P9WJ31</accession>
<accession>L0T7J3</accession>
<accession>O08147</accession>
<accession>P71998</accession>
<accession>Q7D818</accession>
<sequence length="70" mass="7608">MELAARMGETLTQAVVVAVREQLARRTGRTRSISLREELAAIGRRCAALPVLDTRAADTILGYDERGLPA</sequence>
<protein>
    <recommendedName>
        <fullName>Putative antitoxin VapB34</fullName>
    </recommendedName>
</protein>
<evidence type="ECO:0000305" key="1">
    <source>
    </source>
</evidence>
<comment type="function">
    <text evidence="1">Antitoxin component of a possible type II toxin-antitoxin (TA) system. The cognate toxin is VapC34.</text>
</comment>
<keyword id="KW-1185">Reference proteome</keyword>
<keyword id="KW-1277">Toxin-antitoxin system</keyword>
<reference key="1">
    <citation type="journal article" date="1998" name="Nature">
        <title>Deciphering the biology of Mycobacterium tuberculosis from the complete genome sequence.</title>
        <authorList>
            <person name="Cole S.T."/>
            <person name="Brosch R."/>
            <person name="Parkhill J."/>
            <person name="Garnier T."/>
            <person name="Churcher C.M."/>
            <person name="Harris D.E."/>
            <person name="Gordon S.V."/>
            <person name="Eiglmeier K."/>
            <person name="Gas S."/>
            <person name="Barry C.E. III"/>
            <person name="Tekaia F."/>
            <person name="Badcock K."/>
            <person name="Basham D."/>
            <person name="Brown D."/>
            <person name="Chillingworth T."/>
            <person name="Connor R."/>
            <person name="Davies R.M."/>
            <person name="Devlin K."/>
            <person name="Feltwell T."/>
            <person name="Gentles S."/>
            <person name="Hamlin N."/>
            <person name="Holroyd S."/>
            <person name="Hornsby T."/>
            <person name="Jagels K."/>
            <person name="Krogh A."/>
            <person name="McLean J."/>
            <person name="Moule S."/>
            <person name="Murphy L.D."/>
            <person name="Oliver S."/>
            <person name="Osborne J."/>
            <person name="Quail M.A."/>
            <person name="Rajandream M.A."/>
            <person name="Rogers J."/>
            <person name="Rutter S."/>
            <person name="Seeger K."/>
            <person name="Skelton S."/>
            <person name="Squares S."/>
            <person name="Squares R."/>
            <person name="Sulston J.E."/>
            <person name="Taylor K."/>
            <person name="Whitehead S."/>
            <person name="Barrell B.G."/>
        </authorList>
    </citation>
    <scope>NUCLEOTIDE SEQUENCE [LARGE SCALE GENOMIC DNA]</scope>
    <source>
        <strain>ATCC 25618 / H37Rv</strain>
    </source>
</reference>
<reference key="2">
    <citation type="journal article" date="2009" name="PLoS Genet.">
        <title>Comprehensive functional analysis of Mycobacterium tuberculosis toxin-antitoxin systems: implications for pathogenesis, stress responses, and evolution.</title>
        <authorList>
            <person name="Ramage H.R."/>
            <person name="Connolly L.E."/>
            <person name="Cox J.S."/>
        </authorList>
    </citation>
    <scope>POSSIBLE FUNCTION</scope>
    <source>
        <strain>ATCC 35801 / TMC 107 / Erdman</strain>
    </source>
</reference>
<gene>
    <name type="primary">vapB34</name>
    <name type="ordered locus">Rv1740</name>
</gene>
<proteinExistence type="predicted"/>
<organism>
    <name type="scientific">Mycobacterium tuberculosis (strain ATCC 25618 / H37Rv)</name>
    <dbReference type="NCBI Taxonomy" id="83332"/>
    <lineage>
        <taxon>Bacteria</taxon>
        <taxon>Bacillati</taxon>
        <taxon>Actinomycetota</taxon>
        <taxon>Actinomycetes</taxon>
        <taxon>Mycobacteriales</taxon>
        <taxon>Mycobacteriaceae</taxon>
        <taxon>Mycobacterium</taxon>
        <taxon>Mycobacterium tuberculosis complex</taxon>
    </lineage>
</organism>
<name>VPB34_MYCTU</name>
<feature type="chain" id="PRO_0000413610" description="Putative antitoxin VapB34">
    <location>
        <begin position="1"/>
        <end position="70"/>
    </location>
</feature>